<name>ATPA_BURCJ</name>
<evidence type="ECO:0000255" key="1">
    <source>
        <dbReference type="HAMAP-Rule" id="MF_01346"/>
    </source>
</evidence>
<protein>
    <recommendedName>
        <fullName evidence="1">ATP synthase subunit alpha</fullName>
        <ecNumber evidence="1">7.1.2.2</ecNumber>
    </recommendedName>
    <alternativeName>
        <fullName evidence="1">ATP synthase F1 sector subunit alpha</fullName>
    </alternativeName>
    <alternativeName>
        <fullName evidence="1">F-ATPase subunit alpha</fullName>
    </alternativeName>
</protein>
<dbReference type="EC" id="7.1.2.2" evidence="1"/>
<dbReference type="EMBL" id="AM747720">
    <property type="protein sequence ID" value="CAR50340.1"/>
    <property type="molecule type" value="Genomic_DNA"/>
</dbReference>
<dbReference type="RefSeq" id="WP_006482717.1">
    <property type="nucleotide sequence ID" value="NC_011000.1"/>
</dbReference>
<dbReference type="SMR" id="B4EEY7"/>
<dbReference type="GeneID" id="56556592"/>
<dbReference type="KEGG" id="bcj:BCAL0034"/>
<dbReference type="eggNOG" id="COG0056">
    <property type="taxonomic scope" value="Bacteria"/>
</dbReference>
<dbReference type="HOGENOM" id="CLU_010091_2_1_4"/>
<dbReference type="BioCyc" id="BCEN216591:G1G1V-37-MONOMER"/>
<dbReference type="Proteomes" id="UP000001035">
    <property type="component" value="Chromosome 1"/>
</dbReference>
<dbReference type="GO" id="GO:0005886">
    <property type="term" value="C:plasma membrane"/>
    <property type="evidence" value="ECO:0007669"/>
    <property type="project" value="UniProtKB-SubCell"/>
</dbReference>
<dbReference type="GO" id="GO:0045259">
    <property type="term" value="C:proton-transporting ATP synthase complex"/>
    <property type="evidence" value="ECO:0007669"/>
    <property type="project" value="UniProtKB-KW"/>
</dbReference>
<dbReference type="GO" id="GO:0043531">
    <property type="term" value="F:ADP binding"/>
    <property type="evidence" value="ECO:0007669"/>
    <property type="project" value="TreeGrafter"/>
</dbReference>
<dbReference type="GO" id="GO:0005524">
    <property type="term" value="F:ATP binding"/>
    <property type="evidence" value="ECO:0007669"/>
    <property type="project" value="UniProtKB-UniRule"/>
</dbReference>
<dbReference type="GO" id="GO:0046933">
    <property type="term" value="F:proton-transporting ATP synthase activity, rotational mechanism"/>
    <property type="evidence" value="ECO:0007669"/>
    <property type="project" value="UniProtKB-UniRule"/>
</dbReference>
<dbReference type="CDD" id="cd18113">
    <property type="entry name" value="ATP-synt_F1_alpha_C"/>
    <property type="match status" value="1"/>
</dbReference>
<dbReference type="CDD" id="cd18116">
    <property type="entry name" value="ATP-synt_F1_alpha_N"/>
    <property type="match status" value="1"/>
</dbReference>
<dbReference type="CDD" id="cd01132">
    <property type="entry name" value="F1-ATPase_alpha_CD"/>
    <property type="match status" value="1"/>
</dbReference>
<dbReference type="FunFam" id="1.20.150.20:FF:000001">
    <property type="entry name" value="ATP synthase subunit alpha"/>
    <property type="match status" value="1"/>
</dbReference>
<dbReference type="FunFam" id="2.40.30.20:FF:000001">
    <property type="entry name" value="ATP synthase subunit alpha"/>
    <property type="match status" value="1"/>
</dbReference>
<dbReference type="FunFam" id="3.40.50.300:FF:000002">
    <property type="entry name" value="ATP synthase subunit alpha"/>
    <property type="match status" value="1"/>
</dbReference>
<dbReference type="Gene3D" id="2.40.30.20">
    <property type="match status" value="1"/>
</dbReference>
<dbReference type="Gene3D" id="1.20.150.20">
    <property type="entry name" value="ATP synthase alpha/beta chain, C-terminal domain"/>
    <property type="match status" value="1"/>
</dbReference>
<dbReference type="Gene3D" id="3.40.50.300">
    <property type="entry name" value="P-loop containing nucleotide triphosphate hydrolases"/>
    <property type="match status" value="1"/>
</dbReference>
<dbReference type="HAMAP" id="MF_01346">
    <property type="entry name" value="ATP_synth_alpha_bact"/>
    <property type="match status" value="1"/>
</dbReference>
<dbReference type="InterPro" id="IPR023366">
    <property type="entry name" value="ATP_synth_asu-like_sf"/>
</dbReference>
<dbReference type="InterPro" id="IPR000793">
    <property type="entry name" value="ATP_synth_asu_C"/>
</dbReference>
<dbReference type="InterPro" id="IPR038376">
    <property type="entry name" value="ATP_synth_asu_C_sf"/>
</dbReference>
<dbReference type="InterPro" id="IPR033732">
    <property type="entry name" value="ATP_synth_F1_a_nt-bd_dom"/>
</dbReference>
<dbReference type="InterPro" id="IPR005294">
    <property type="entry name" value="ATP_synth_F1_asu"/>
</dbReference>
<dbReference type="InterPro" id="IPR020003">
    <property type="entry name" value="ATPase_a/bsu_AS"/>
</dbReference>
<dbReference type="InterPro" id="IPR004100">
    <property type="entry name" value="ATPase_F1/V1/A1_a/bsu_N"/>
</dbReference>
<dbReference type="InterPro" id="IPR036121">
    <property type="entry name" value="ATPase_F1/V1/A1_a/bsu_N_sf"/>
</dbReference>
<dbReference type="InterPro" id="IPR000194">
    <property type="entry name" value="ATPase_F1/V1/A1_a/bsu_nucl-bd"/>
</dbReference>
<dbReference type="InterPro" id="IPR027417">
    <property type="entry name" value="P-loop_NTPase"/>
</dbReference>
<dbReference type="NCBIfam" id="TIGR00962">
    <property type="entry name" value="atpA"/>
    <property type="match status" value="1"/>
</dbReference>
<dbReference type="NCBIfam" id="NF009884">
    <property type="entry name" value="PRK13343.1"/>
    <property type="match status" value="1"/>
</dbReference>
<dbReference type="PANTHER" id="PTHR48082">
    <property type="entry name" value="ATP SYNTHASE SUBUNIT ALPHA, MITOCHONDRIAL"/>
    <property type="match status" value="1"/>
</dbReference>
<dbReference type="PANTHER" id="PTHR48082:SF2">
    <property type="entry name" value="ATP SYNTHASE SUBUNIT ALPHA, MITOCHONDRIAL"/>
    <property type="match status" value="1"/>
</dbReference>
<dbReference type="Pfam" id="PF00006">
    <property type="entry name" value="ATP-synt_ab"/>
    <property type="match status" value="1"/>
</dbReference>
<dbReference type="Pfam" id="PF00306">
    <property type="entry name" value="ATP-synt_ab_C"/>
    <property type="match status" value="1"/>
</dbReference>
<dbReference type="Pfam" id="PF02874">
    <property type="entry name" value="ATP-synt_ab_N"/>
    <property type="match status" value="1"/>
</dbReference>
<dbReference type="PIRSF" id="PIRSF039088">
    <property type="entry name" value="F_ATPase_subunit_alpha"/>
    <property type="match status" value="1"/>
</dbReference>
<dbReference type="SUPFAM" id="SSF47917">
    <property type="entry name" value="C-terminal domain of alpha and beta subunits of F1 ATP synthase"/>
    <property type="match status" value="1"/>
</dbReference>
<dbReference type="SUPFAM" id="SSF50615">
    <property type="entry name" value="N-terminal domain of alpha and beta subunits of F1 ATP synthase"/>
    <property type="match status" value="1"/>
</dbReference>
<dbReference type="SUPFAM" id="SSF52540">
    <property type="entry name" value="P-loop containing nucleoside triphosphate hydrolases"/>
    <property type="match status" value="1"/>
</dbReference>
<dbReference type="PROSITE" id="PS00152">
    <property type="entry name" value="ATPASE_ALPHA_BETA"/>
    <property type="match status" value="1"/>
</dbReference>
<organism>
    <name type="scientific">Burkholderia cenocepacia (strain ATCC BAA-245 / DSM 16553 / LMG 16656 / NCTC 13227 / J2315 / CF5610)</name>
    <name type="common">Burkholderia cepacia (strain J2315)</name>
    <dbReference type="NCBI Taxonomy" id="216591"/>
    <lineage>
        <taxon>Bacteria</taxon>
        <taxon>Pseudomonadati</taxon>
        <taxon>Pseudomonadota</taxon>
        <taxon>Betaproteobacteria</taxon>
        <taxon>Burkholderiales</taxon>
        <taxon>Burkholderiaceae</taxon>
        <taxon>Burkholderia</taxon>
        <taxon>Burkholderia cepacia complex</taxon>
    </lineage>
</organism>
<comment type="function">
    <text evidence="1">Produces ATP from ADP in the presence of a proton gradient across the membrane. The alpha chain is a regulatory subunit.</text>
</comment>
<comment type="catalytic activity">
    <reaction evidence="1">
        <text>ATP + H2O + 4 H(+)(in) = ADP + phosphate + 5 H(+)(out)</text>
        <dbReference type="Rhea" id="RHEA:57720"/>
        <dbReference type="ChEBI" id="CHEBI:15377"/>
        <dbReference type="ChEBI" id="CHEBI:15378"/>
        <dbReference type="ChEBI" id="CHEBI:30616"/>
        <dbReference type="ChEBI" id="CHEBI:43474"/>
        <dbReference type="ChEBI" id="CHEBI:456216"/>
        <dbReference type="EC" id="7.1.2.2"/>
    </reaction>
</comment>
<comment type="subunit">
    <text evidence="1">F-type ATPases have 2 components, CF(1) - the catalytic core - and CF(0) - the membrane proton channel. CF(1) has five subunits: alpha(3), beta(3), gamma(1), delta(1), epsilon(1). CF(0) has three main subunits: a(1), b(2) and c(9-12). The alpha and beta chains form an alternating ring which encloses part of the gamma chain. CF(1) is attached to CF(0) by a central stalk formed by the gamma and epsilon chains, while a peripheral stalk is formed by the delta and b chains.</text>
</comment>
<comment type="subcellular location">
    <subcellularLocation>
        <location evidence="1">Cell inner membrane</location>
        <topology evidence="1">Peripheral membrane protein</topology>
    </subcellularLocation>
</comment>
<comment type="similarity">
    <text evidence="1">Belongs to the ATPase alpha/beta chains family.</text>
</comment>
<accession>B4EEY7</accession>
<gene>
    <name evidence="1" type="primary">atpA</name>
    <name type="ordered locus">BceJ2315_00340</name>
    <name type="ORF">BCAL0034</name>
</gene>
<reference key="1">
    <citation type="journal article" date="2009" name="J. Bacteriol.">
        <title>The genome of Burkholderia cenocepacia J2315, an epidemic pathogen of cystic fibrosis patients.</title>
        <authorList>
            <person name="Holden M.T."/>
            <person name="Seth-Smith H.M."/>
            <person name="Crossman L.C."/>
            <person name="Sebaihia M."/>
            <person name="Bentley S.D."/>
            <person name="Cerdeno-Tarraga A.M."/>
            <person name="Thomson N.R."/>
            <person name="Bason N."/>
            <person name="Quail M.A."/>
            <person name="Sharp S."/>
            <person name="Cherevach I."/>
            <person name="Churcher C."/>
            <person name="Goodhead I."/>
            <person name="Hauser H."/>
            <person name="Holroyd N."/>
            <person name="Mungall K."/>
            <person name="Scott P."/>
            <person name="Walker D."/>
            <person name="White B."/>
            <person name="Rose H."/>
            <person name="Iversen P."/>
            <person name="Mil-Homens D."/>
            <person name="Rocha E.P."/>
            <person name="Fialho A.M."/>
            <person name="Baldwin A."/>
            <person name="Dowson C."/>
            <person name="Barrell B.G."/>
            <person name="Govan J.R."/>
            <person name="Vandamme P."/>
            <person name="Hart C.A."/>
            <person name="Mahenthiralingam E."/>
            <person name="Parkhill J."/>
        </authorList>
    </citation>
    <scope>NUCLEOTIDE SEQUENCE [LARGE SCALE GENOMIC DNA]</scope>
    <source>
        <strain>ATCC BAA-245 / DSM 16553 / LMG 16656 / NCTC 13227 / J2315 / CF5610</strain>
    </source>
</reference>
<keyword id="KW-0066">ATP synthesis</keyword>
<keyword id="KW-0067">ATP-binding</keyword>
<keyword id="KW-0997">Cell inner membrane</keyword>
<keyword id="KW-1003">Cell membrane</keyword>
<keyword id="KW-0139">CF(1)</keyword>
<keyword id="KW-0375">Hydrogen ion transport</keyword>
<keyword id="KW-0406">Ion transport</keyword>
<keyword id="KW-0472">Membrane</keyword>
<keyword id="KW-0547">Nucleotide-binding</keyword>
<keyword id="KW-1278">Translocase</keyword>
<keyword id="KW-0813">Transport</keyword>
<sequence length="513" mass="55772">MQLNPSEISELIKSRIQGLEASADVRNQGTVISVTDGIVRIHGLSDVMQGEMLEFPGNTFGLALNLERDSVGAVILGEYEHISEGDIVKTTGRILEVPVGPELVGRVVDALGNPIDGKGPVNAKLTDAIEKIAPGVIWRKSVSQPVQTGIKSIDAMVPIGRGQRELIIGDRQCGKTAVALDAIINQKGKDLICIYVAIGQKASSIMNVVRKLEETGAMEYTIVVAASASDSAAMQYLAPYAGCTMGEYFRDRGQDALIIYDDLTKQAWAYRQISLLLRRPPGREAYPGDVFYLHSRLLERAARVSEEYVEKFTNGEVKGKSGSLTALPVIETQAGDVTAFVPTNVISITDGQIFLETDLFNAGIRPAINAGVSVSRVGGAAQTKVVKKLSGGIRTDLAQYRELAAFAQFASDLDEATRKQLERGRRVTELLKQPQYQPLQVWELAVSLYAANNGYLDDLDVKQVLSFEKGLRDNLKTSHADLIKRIEDTKDLSKDDEGALRSAIEAFKKSGAY</sequence>
<feature type="chain" id="PRO_1000143350" description="ATP synthase subunit alpha">
    <location>
        <begin position="1"/>
        <end position="513"/>
    </location>
</feature>
<feature type="binding site" evidence="1">
    <location>
        <begin position="169"/>
        <end position="176"/>
    </location>
    <ligand>
        <name>ATP</name>
        <dbReference type="ChEBI" id="CHEBI:30616"/>
    </ligand>
</feature>
<feature type="site" description="Required for activity" evidence="1">
    <location>
        <position position="373"/>
    </location>
</feature>
<proteinExistence type="inferred from homology"/>